<comment type="function">
    <text evidence="1">Hydrolyzes the pyrophosphate bond of UDP-2,3-diacylglucosamine to yield 2,3-diacylglucosamine 1-phosphate (lipid X) and UMP by catalyzing the attack of water at the alpha-P atom. Involved in the biosynthesis of lipid A, a phosphorylated glycolipid that anchors the lipopolysaccharide to the outer membrane of the cell.</text>
</comment>
<comment type="catalytic activity">
    <reaction evidence="1">
        <text>UDP-2-N,3-O-bis[(3R)-3-hydroxytetradecanoyl]-alpha-D-glucosamine + H2O = 2-N,3-O-bis[(3R)-3-hydroxytetradecanoyl]-alpha-D-glucosaminyl 1-phosphate + UMP + 2 H(+)</text>
        <dbReference type="Rhea" id="RHEA:25213"/>
        <dbReference type="ChEBI" id="CHEBI:15377"/>
        <dbReference type="ChEBI" id="CHEBI:15378"/>
        <dbReference type="ChEBI" id="CHEBI:57865"/>
        <dbReference type="ChEBI" id="CHEBI:57957"/>
        <dbReference type="ChEBI" id="CHEBI:78847"/>
        <dbReference type="EC" id="3.6.1.54"/>
    </reaction>
</comment>
<comment type="cofactor">
    <cofactor evidence="1">
        <name>Mn(2+)</name>
        <dbReference type="ChEBI" id="CHEBI:29035"/>
    </cofactor>
    <text evidence="1">Binds 2 Mn(2+) ions per subunit in a binuclear metal center.</text>
</comment>
<comment type="pathway">
    <text evidence="1">Glycolipid biosynthesis; lipid IV(A) biosynthesis; lipid IV(A) from (3R)-3-hydroxytetradecanoyl-[acyl-carrier-protein] and UDP-N-acetyl-alpha-D-glucosamine: step 4/6.</text>
</comment>
<comment type="subcellular location">
    <subcellularLocation>
        <location evidence="1">Cell inner membrane</location>
        <topology evidence="1">Peripheral membrane protein</topology>
        <orientation evidence="1">Cytoplasmic side</orientation>
    </subcellularLocation>
</comment>
<comment type="similarity">
    <text evidence="1">Belongs to the LpxH family.</text>
</comment>
<gene>
    <name evidence="1" type="primary">lpxH</name>
    <name type="ordered locus">PC1_2936</name>
</gene>
<dbReference type="EC" id="3.6.1.54" evidence="1"/>
<dbReference type="EMBL" id="CP001657">
    <property type="protein sequence ID" value="ACT13959.1"/>
    <property type="molecule type" value="Genomic_DNA"/>
</dbReference>
<dbReference type="RefSeq" id="WP_015841115.1">
    <property type="nucleotide sequence ID" value="NC_012917.1"/>
</dbReference>
<dbReference type="SMR" id="C6DAX5"/>
<dbReference type="STRING" id="561230.PC1_2936"/>
<dbReference type="KEGG" id="pct:PC1_2936"/>
<dbReference type="eggNOG" id="COG2908">
    <property type="taxonomic scope" value="Bacteria"/>
</dbReference>
<dbReference type="HOGENOM" id="CLU_074586_0_0_6"/>
<dbReference type="OrthoDB" id="9783283at2"/>
<dbReference type="UniPathway" id="UPA00359">
    <property type="reaction ID" value="UER00480"/>
</dbReference>
<dbReference type="Proteomes" id="UP000002736">
    <property type="component" value="Chromosome"/>
</dbReference>
<dbReference type="GO" id="GO:0005737">
    <property type="term" value="C:cytoplasm"/>
    <property type="evidence" value="ECO:0007669"/>
    <property type="project" value="InterPro"/>
</dbReference>
<dbReference type="GO" id="GO:0019897">
    <property type="term" value="C:extrinsic component of plasma membrane"/>
    <property type="evidence" value="ECO:0007669"/>
    <property type="project" value="UniProtKB-UniRule"/>
</dbReference>
<dbReference type="GO" id="GO:0030145">
    <property type="term" value="F:manganese ion binding"/>
    <property type="evidence" value="ECO:0007669"/>
    <property type="project" value="UniProtKB-UniRule"/>
</dbReference>
<dbReference type="GO" id="GO:0008758">
    <property type="term" value="F:UDP-2,3-diacylglucosamine hydrolase activity"/>
    <property type="evidence" value="ECO:0007669"/>
    <property type="project" value="UniProtKB-UniRule"/>
</dbReference>
<dbReference type="GO" id="GO:0009245">
    <property type="term" value="P:lipid A biosynthetic process"/>
    <property type="evidence" value="ECO:0007669"/>
    <property type="project" value="UniProtKB-UniRule"/>
</dbReference>
<dbReference type="CDD" id="cd07398">
    <property type="entry name" value="MPP_YbbF-LpxH"/>
    <property type="match status" value="1"/>
</dbReference>
<dbReference type="Gene3D" id="3.60.21.10">
    <property type="match status" value="1"/>
</dbReference>
<dbReference type="HAMAP" id="MF_00575">
    <property type="entry name" value="LpxH"/>
    <property type="match status" value="1"/>
</dbReference>
<dbReference type="InterPro" id="IPR004843">
    <property type="entry name" value="Calcineurin-like_PHP_ApaH"/>
</dbReference>
<dbReference type="InterPro" id="IPR043461">
    <property type="entry name" value="LpxH-like"/>
</dbReference>
<dbReference type="InterPro" id="IPR029052">
    <property type="entry name" value="Metallo-depent_PP-like"/>
</dbReference>
<dbReference type="InterPro" id="IPR010138">
    <property type="entry name" value="UDP-diacylglucosamine_Hdrlase"/>
</dbReference>
<dbReference type="NCBIfam" id="TIGR01854">
    <property type="entry name" value="lipid_A_lpxH"/>
    <property type="match status" value="1"/>
</dbReference>
<dbReference type="NCBIfam" id="NF003743">
    <property type="entry name" value="PRK05340.1"/>
    <property type="match status" value="1"/>
</dbReference>
<dbReference type="PANTHER" id="PTHR34990:SF1">
    <property type="entry name" value="UDP-2,3-DIACYLGLUCOSAMINE HYDROLASE"/>
    <property type="match status" value="1"/>
</dbReference>
<dbReference type="PANTHER" id="PTHR34990">
    <property type="entry name" value="UDP-2,3-DIACYLGLUCOSAMINE HYDROLASE-RELATED"/>
    <property type="match status" value="1"/>
</dbReference>
<dbReference type="Pfam" id="PF00149">
    <property type="entry name" value="Metallophos"/>
    <property type="match status" value="1"/>
</dbReference>
<dbReference type="SUPFAM" id="SSF56300">
    <property type="entry name" value="Metallo-dependent phosphatases"/>
    <property type="match status" value="1"/>
</dbReference>
<reference key="1">
    <citation type="submission" date="2009-07" db="EMBL/GenBank/DDBJ databases">
        <title>Complete sequence of Pectobacterium carotovorum subsp. carotovorum PC1.</title>
        <authorList>
            <consortium name="US DOE Joint Genome Institute"/>
            <person name="Lucas S."/>
            <person name="Copeland A."/>
            <person name="Lapidus A."/>
            <person name="Glavina del Rio T."/>
            <person name="Tice H."/>
            <person name="Bruce D."/>
            <person name="Goodwin L."/>
            <person name="Pitluck S."/>
            <person name="Munk A.C."/>
            <person name="Brettin T."/>
            <person name="Detter J.C."/>
            <person name="Han C."/>
            <person name="Tapia R."/>
            <person name="Larimer F."/>
            <person name="Land M."/>
            <person name="Hauser L."/>
            <person name="Kyrpides N."/>
            <person name="Mikhailova N."/>
            <person name="Balakrishnan V."/>
            <person name="Glasner J."/>
            <person name="Perna N.T."/>
        </authorList>
    </citation>
    <scope>NUCLEOTIDE SEQUENCE [LARGE SCALE GENOMIC DNA]</scope>
    <source>
        <strain>PC1</strain>
    </source>
</reference>
<organism>
    <name type="scientific">Pectobacterium carotovorum subsp. carotovorum (strain PC1)</name>
    <dbReference type="NCBI Taxonomy" id="561230"/>
    <lineage>
        <taxon>Bacteria</taxon>
        <taxon>Pseudomonadati</taxon>
        <taxon>Pseudomonadota</taxon>
        <taxon>Gammaproteobacteria</taxon>
        <taxon>Enterobacterales</taxon>
        <taxon>Pectobacteriaceae</taxon>
        <taxon>Pectobacterium</taxon>
    </lineage>
</organism>
<keyword id="KW-0997">Cell inner membrane</keyword>
<keyword id="KW-1003">Cell membrane</keyword>
<keyword id="KW-0378">Hydrolase</keyword>
<keyword id="KW-0441">Lipid A biosynthesis</keyword>
<keyword id="KW-0444">Lipid biosynthesis</keyword>
<keyword id="KW-0443">Lipid metabolism</keyword>
<keyword id="KW-0464">Manganese</keyword>
<keyword id="KW-0472">Membrane</keyword>
<keyword id="KW-0479">Metal-binding</keyword>
<sequence length="240" mass="27549">MATLFIADLHLSLHEPAITAGFLRFLRHDAIHADALYILGDLFDAWIGDDDPQPLHATIAAELYVLHQRGIPCYFVHGNRDFLIGKRFAKQSGMTLLPTETVLDLYGQKILILHGDTLCTDDHHYQQFRRRVHNPFIQRLFLLLPLSSRVKIAAKMRATSQQENQKKSQQIMDVNHDAVLERLRHYQVKTMIHGHTHRPAIHQVDLGESYGRRAVLGAWHEEGSMIKVTPQNIELISFPF</sequence>
<feature type="chain" id="PRO_1000212095" description="UDP-2,3-diacylglucosamine hydrolase">
    <location>
        <begin position="1"/>
        <end position="240"/>
    </location>
</feature>
<feature type="binding site" evidence="1">
    <location>
        <position position="8"/>
    </location>
    <ligand>
        <name>Mn(2+)</name>
        <dbReference type="ChEBI" id="CHEBI:29035"/>
        <label>1</label>
    </ligand>
</feature>
<feature type="binding site" evidence="1">
    <location>
        <position position="10"/>
    </location>
    <ligand>
        <name>Mn(2+)</name>
        <dbReference type="ChEBI" id="CHEBI:29035"/>
        <label>1</label>
    </ligand>
</feature>
<feature type="binding site" evidence="1">
    <location>
        <position position="41"/>
    </location>
    <ligand>
        <name>Mn(2+)</name>
        <dbReference type="ChEBI" id="CHEBI:29035"/>
        <label>1</label>
    </ligand>
</feature>
<feature type="binding site" evidence="1">
    <location>
        <position position="41"/>
    </location>
    <ligand>
        <name>Mn(2+)</name>
        <dbReference type="ChEBI" id="CHEBI:29035"/>
        <label>2</label>
    </ligand>
</feature>
<feature type="binding site" evidence="1">
    <location>
        <begin position="79"/>
        <end position="80"/>
    </location>
    <ligand>
        <name>substrate</name>
    </ligand>
</feature>
<feature type="binding site" evidence="1">
    <location>
        <position position="79"/>
    </location>
    <ligand>
        <name>Mn(2+)</name>
        <dbReference type="ChEBI" id="CHEBI:29035"/>
        <label>2</label>
    </ligand>
</feature>
<feature type="binding site" evidence="1">
    <location>
        <position position="114"/>
    </location>
    <ligand>
        <name>Mn(2+)</name>
        <dbReference type="ChEBI" id="CHEBI:29035"/>
        <label>2</label>
    </ligand>
</feature>
<feature type="binding site" evidence="1">
    <location>
        <position position="122"/>
    </location>
    <ligand>
        <name>substrate</name>
    </ligand>
</feature>
<feature type="binding site" evidence="1">
    <location>
        <position position="160"/>
    </location>
    <ligand>
        <name>substrate</name>
    </ligand>
</feature>
<feature type="binding site" evidence="1">
    <location>
        <position position="164"/>
    </location>
    <ligand>
        <name>substrate</name>
    </ligand>
</feature>
<feature type="binding site" evidence="1">
    <location>
        <position position="167"/>
    </location>
    <ligand>
        <name>substrate</name>
    </ligand>
</feature>
<feature type="binding site" evidence="1">
    <location>
        <position position="195"/>
    </location>
    <ligand>
        <name>Mn(2+)</name>
        <dbReference type="ChEBI" id="CHEBI:29035"/>
        <label>2</label>
    </ligand>
</feature>
<feature type="binding site" evidence="1">
    <location>
        <position position="195"/>
    </location>
    <ligand>
        <name>substrate</name>
    </ligand>
</feature>
<feature type="binding site" evidence="1">
    <location>
        <position position="197"/>
    </location>
    <ligand>
        <name>Mn(2+)</name>
        <dbReference type="ChEBI" id="CHEBI:29035"/>
        <label>1</label>
    </ligand>
</feature>
<accession>C6DAX5</accession>
<proteinExistence type="inferred from homology"/>
<name>LPXH_PECCP</name>
<evidence type="ECO:0000255" key="1">
    <source>
        <dbReference type="HAMAP-Rule" id="MF_00575"/>
    </source>
</evidence>
<protein>
    <recommendedName>
        <fullName evidence="1">UDP-2,3-diacylglucosamine hydrolase</fullName>
        <ecNumber evidence="1">3.6.1.54</ecNumber>
    </recommendedName>
    <alternativeName>
        <fullName evidence="1">UDP-2,3-diacylglucosamine diphosphatase</fullName>
    </alternativeName>
</protein>